<keyword id="KW-0165">Cleavage on pair of basic residues</keyword>
<keyword id="KW-0175">Coiled coil</keyword>
<keyword id="KW-1015">Disulfide bond</keyword>
<keyword id="KW-1169">Fusion of virus membrane with host cell membrane</keyword>
<keyword id="KW-1168">Fusion of virus membrane with host membrane</keyword>
<keyword id="KW-0325">Glycoprotein</keyword>
<keyword id="KW-1032">Host cell membrane</keyword>
<keyword id="KW-1043">Host membrane</keyword>
<keyword id="KW-0945">Host-virus interaction</keyword>
<keyword id="KW-0449">Lipoprotein</keyword>
<keyword id="KW-0472">Membrane</keyword>
<keyword id="KW-0564">Palmitate</keyword>
<keyword id="KW-0732">Signal</keyword>
<keyword id="KW-0812">Transmembrane</keyword>
<keyword id="KW-1133">Transmembrane helix</keyword>
<keyword id="KW-1161">Viral attachment to host cell</keyword>
<keyword id="KW-0261">Viral envelope protein</keyword>
<keyword id="KW-1162">Viral penetration into host cytoplasm</keyword>
<keyword id="KW-0946">Virion</keyword>
<keyword id="KW-1160">Virus entry into host cell</keyword>
<dbReference type="EMBL" id="X01455">
    <property type="protein sequence ID" value="CAA25686.1"/>
    <property type="molecule type" value="Genomic_RNA"/>
</dbReference>
<dbReference type="PIR" id="A03999">
    <property type="entry name" value="VCVDAR"/>
</dbReference>
<dbReference type="SMR" id="P03399"/>
<dbReference type="GlyCosmos" id="P03399">
    <property type="glycosylation" value="4 sites, No reported glycans"/>
</dbReference>
<dbReference type="GO" id="GO:0020002">
    <property type="term" value="C:host cell plasma membrane"/>
    <property type="evidence" value="ECO:0007669"/>
    <property type="project" value="UniProtKB-SubCell"/>
</dbReference>
<dbReference type="GO" id="GO:0016020">
    <property type="term" value="C:membrane"/>
    <property type="evidence" value="ECO:0007669"/>
    <property type="project" value="UniProtKB-KW"/>
</dbReference>
<dbReference type="GO" id="GO:0019031">
    <property type="term" value="C:viral envelope"/>
    <property type="evidence" value="ECO:0007669"/>
    <property type="project" value="UniProtKB-KW"/>
</dbReference>
<dbReference type="GO" id="GO:0055036">
    <property type="term" value="C:virion membrane"/>
    <property type="evidence" value="ECO:0007669"/>
    <property type="project" value="UniProtKB-SubCell"/>
</dbReference>
<dbReference type="GO" id="GO:0019064">
    <property type="term" value="P:fusion of virus membrane with host plasma membrane"/>
    <property type="evidence" value="ECO:0007669"/>
    <property type="project" value="UniProtKB-KW"/>
</dbReference>
<dbReference type="GO" id="GO:0046718">
    <property type="term" value="P:symbiont entry into host cell"/>
    <property type="evidence" value="ECO:0007669"/>
    <property type="project" value="UniProtKB-KW"/>
</dbReference>
<dbReference type="GO" id="GO:0019062">
    <property type="term" value="P:virion attachment to host cell"/>
    <property type="evidence" value="ECO:0007669"/>
    <property type="project" value="UniProtKB-KW"/>
</dbReference>
<dbReference type="CDD" id="cd09851">
    <property type="entry name" value="HTLV-1-like_HR1-HR2"/>
    <property type="match status" value="1"/>
</dbReference>
<dbReference type="Gene3D" id="1.10.287.210">
    <property type="match status" value="1"/>
</dbReference>
<dbReference type="InterPro" id="IPR018154">
    <property type="entry name" value="TLV/ENV_coat_polyprotein"/>
</dbReference>
<dbReference type="PANTHER" id="PTHR10424:SF75">
    <property type="entry name" value="ENDOGENOUS RETROVIRUS GROUP S71 MEMBER 1 ENV POLYPROTEIN"/>
    <property type="match status" value="1"/>
</dbReference>
<dbReference type="PANTHER" id="PTHR10424">
    <property type="entry name" value="VIRAL ENVELOPE PROTEIN"/>
    <property type="match status" value="1"/>
</dbReference>
<dbReference type="Pfam" id="PF00429">
    <property type="entry name" value="TLV_coat"/>
    <property type="match status" value="1"/>
</dbReference>
<dbReference type="SUPFAM" id="SSF58069">
    <property type="entry name" value="Virus ectodomain"/>
    <property type="match status" value="1"/>
</dbReference>
<proteinExistence type="inferred from homology"/>
<organismHost>
    <name type="scientific">Galliformes</name>
    <dbReference type="NCBI Taxonomy" id="8976"/>
</organismHost>
<protein>
    <recommendedName>
        <fullName>Envelope glycoprotein</fullName>
    </recommendedName>
    <alternativeName>
        <fullName>Env polyprotein</fullName>
    </alternativeName>
    <component>
        <recommendedName>
            <fullName>Surface protein</fullName>
            <shortName>SU</shortName>
        </recommendedName>
        <alternativeName>
            <fullName>Glycoprotein 73</fullName>
            <shortName>gp73</shortName>
        </alternativeName>
    </component>
    <component>
        <recommendedName>
            <fullName>Transmembrane protein</fullName>
            <shortName>TM</shortName>
        </recommendedName>
        <alternativeName>
            <fullName>Glycoprotein 22</fullName>
            <shortName>gp22</shortName>
        </alternativeName>
    </component>
</protein>
<name>ENV_AVIRE</name>
<comment type="function">
    <text evidence="1">The surface protein (SU) attaches the virus to the host cell by binding to its receptor. This interaction triggers the refolding of the transmembrane protein (TM) and is thought to activate its fusogenic potential by unmasking its fusion peptide. Fusion occurs at the host cell plasma membrane (By similarity).</text>
</comment>
<comment type="function">
    <text evidence="1">The transmembrane protein (TM) acts as a class I viral fusion protein. Under the current model, the protein has at least 3 conformational states: pre-fusion native state, pre-hairpin intermediate state, and post-fusion hairpin state. During viral and target cell membrane fusion, the coiled coil regions (heptad repeats) assume a trimer-of-hairpins structure, positioning the fusion peptide in close proximity to the C-terminal region of the ectodomain. The formation of this structure appears to drive apposition and subsequent fusion of viral and target cell membranes. Membranes fusion leads to delivery of the nucleocapsid into the cytoplasm (By similarity).</text>
</comment>
<comment type="subunit">
    <text evidence="1">The mature envelope protein (Env) consists of a trimer of SU-TM heterodimers attached by a labile interchain disulfide bond.</text>
</comment>
<comment type="subcellular location">
    <molecule>Transmembrane protein</molecule>
    <subcellularLocation>
        <location evidence="1">Virion membrane</location>
        <topology evidence="1">Single-pass type I membrane protein</topology>
    </subcellularLocation>
    <subcellularLocation>
        <location evidence="1">Host cell membrane</location>
        <topology evidence="1">Single-pass type I membrane protein</topology>
    </subcellularLocation>
    <text evidence="1">It is probably concentrated at the site of budding and incorporated into the virions possibly by contacts between the cytoplasmic tail of Env and the N-terminus of Gag.</text>
</comment>
<comment type="subcellular location">
    <molecule>Surface protein</molecule>
    <subcellularLocation>
        <location evidence="1">Virion membrane</location>
        <topology evidence="1">Peripheral membrane protein</topology>
    </subcellularLocation>
    <subcellularLocation>
        <location evidence="1">Host cell membrane</location>
        <topology evidence="1">Peripheral membrane protein</topology>
    </subcellularLocation>
    <text evidence="1">The surface protein is not anchored to the viral envelope, but associates with the extravirion surface through its binding to TM. It is probably concentrated at the site of budding and incorporated into the virions possibly by contacts between the cytoplasmic tail of Env and the N-terminus of Gag (By similarity).</text>
</comment>
<comment type="domain">
    <text evidence="1">The 17 amino acids long immunosuppressive region is present in many retroviral envelope proteins. Synthetic peptides derived from this relatively conserved sequence inhibit immune function in vitro and in vivo (By similarity).</text>
</comment>
<comment type="PTM">
    <text evidence="1">Specific enzymatic cleavages in vivo yield mature proteins. Envelope glycoproteins are synthesized as an inactive precursor that is N-glycosylated and processed likely by host cell furin or by a furin-like protease in the Golgi to yield the mature SU and TM proteins. The cleavage site between SU and TM requires the minimal sequence [KR]-X-[KR]-R (By similarity).</text>
</comment>
<comment type="PTM">
    <text evidence="1">The CXXC motif is highly conserved across a broad range of retroviral envelope proteins. It is thought to participate in the formation of a labile disulfide bond possibly with the CX6CC motif present in the transmembrane protein. Isomerization of the intersubunit disulfide bond to an SU intrachain disulfide bond is thought to occur upon receptor recognition in order to allow membrane fusion (By similarity).</text>
</comment>
<comment type="PTM">
    <text evidence="1">The transmembrane protein is palmitoylated.</text>
</comment>
<comment type="miscellaneous">
    <text>Strain A is a helper virus of the strain T.</text>
</comment>
<organism>
    <name type="scientific">Avian reticuloendotheliosis virus</name>
    <dbReference type="NCBI Taxonomy" id="11636"/>
    <lineage>
        <taxon>Viruses</taxon>
        <taxon>Riboviria</taxon>
        <taxon>Pararnavirae</taxon>
        <taxon>Artverviricota</taxon>
        <taxon>Revtraviricetes</taxon>
        <taxon>Ortervirales</taxon>
        <taxon>Retroviridae</taxon>
        <taxon>Orthoretrovirinae</taxon>
        <taxon>Gammaretrovirus</taxon>
    </lineage>
</organism>
<reference key="1">
    <citation type="journal article" date="1984" name="J. Virol.">
        <title>Nucleic acid sequences of the oncogene v-rel in reticuloendotheliosis virus strain T and its cellular homolog, the proto-oncogene c-rel.</title>
        <authorList>
            <person name="Wilhelmsen K.C."/>
            <person name="Eggleton K."/>
            <person name="Temin H.M."/>
        </authorList>
    </citation>
    <scope>NUCLEOTIDE SEQUENCE [GENOMIC RNA]</scope>
    <source>
        <strain>A</strain>
    </source>
</reference>
<feature type="signal peptide" evidence="2">
    <location>
        <begin position="1"/>
        <end position="35"/>
    </location>
</feature>
<feature type="chain" id="PRO_0000239546" description="Envelope glycoprotein">
    <location>
        <begin position="36"/>
        <end position="582"/>
    </location>
</feature>
<feature type="chain" id="PRO_0000040683" description="Surface protein" evidence="1">
    <location>
        <begin position="36"/>
        <end position="392"/>
    </location>
</feature>
<feature type="chain" id="PRO_0000040684" description="Transmembrane protein" evidence="1">
    <location>
        <begin position="393"/>
        <end position="582"/>
    </location>
</feature>
<feature type="topological domain" description="Extracellular" evidence="2">
    <location>
        <begin position="36"/>
        <end position="519"/>
    </location>
</feature>
<feature type="transmembrane region" description="Helical" evidence="2">
    <location>
        <begin position="520"/>
        <end position="540"/>
    </location>
</feature>
<feature type="topological domain" description="Cytoplasmic" evidence="2">
    <location>
        <begin position="541"/>
        <end position="582"/>
    </location>
</feature>
<feature type="region of interest" description="Fusion peptide" evidence="2">
    <location>
        <begin position="396"/>
        <end position="416"/>
    </location>
</feature>
<feature type="region of interest" description="Immunosuppression" evidence="1">
    <location>
        <begin position="456"/>
        <end position="472"/>
    </location>
</feature>
<feature type="region of interest" description="Disordered" evidence="3">
    <location>
        <begin position="562"/>
        <end position="582"/>
    </location>
</feature>
<feature type="coiled-coil region" evidence="2">
    <location>
        <begin position="417"/>
        <end position="467"/>
    </location>
</feature>
<feature type="coiled-coil region" evidence="2">
    <location>
        <begin position="477"/>
        <end position="513"/>
    </location>
</feature>
<feature type="short sequence motif" description="CXXC">
    <location>
        <begin position="251"/>
        <end position="254"/>
    </location>
</feature>
<feature type="short sequence motif" description="CX6CC">
    <location>
        <begin position="473"/>
        <end position="481"/>
    </location>
</feature>
<feature type="compositionally biased region" description="Polar residues" evidence="3">
    <location>
        <begin position="562"/>
        <end position="572"/>
    </location>
</feature>
<feature type="site" description="Cleavage; by host" evidence="1">
    <location>
        <begin position="392"/>
        <end position="393"/>
    </location>
</feature>
<feature type="lipid moiety-binding region" description="S-palmitoyl cysteine; by host" evidence="1">
    <location>
        <position position="543"/>
    </location>
</feature>
<feature type="glycosylation site" description="N-linked (GlcNAc...) asparagine; by host" evidence="2">
    <location>
        <position position="241"/>
    </location>
</feature>
<feature type="glycosylation site" description="N-linked (GlcNAc...) asparagine; by host" evidence="2">
    <location>
        <position position="301"/>
    </location>
</feature>
<feature type="glycosylation site" description="N-linked (GlcNAc...) asparagine; by host" evidence="2">
    <location>
        <position position="314"/>
    </location>
</feature>
<feature type="glycosylation site" description="N-linked (GlcNAc...) asparagine; by host" evidence="2">
    <location>
        <position position="485"/>
    </location>
</feature>
<feature type="disulfide bond" description="Interchain (between SU and TM chains, or C-254 with C-481); in linked form" evidence="1">
    <location>
        <begin position="251"/>
        <end position="481"/>
    </location>
</feature>
<feature type="disulfide bond" evidence="1">
    <location>
        <begin position="251"/>
        <end position="254"/>
    </location>
</feature>
<feature type="disulfide bond" evidence="1">
    <location>
        <begin position="473"/>
        <end position="480"/>
    </location>
</feature>
<evidence type="ECO:0000250" key="1"/>
<evidence type="ECO:0000255" key="2"/>
<evidence type="ECO:0000256" key="3">
    <source>
        <dbReference type="SAM" id="MobiDB-lite"/>
    </source>
</evidence>
<accession>P03399</accession>
<sequence>MDCLTDLRSTEGKVDQAGKTLILLVVWWGFGTTAEGHPLQQLWELPCDCSGGYVSPDLPITPTPSIAVASPLPDLRVWLQGSWGWGGGFRQQWECVFKPKIIPSVQEQPGPCECLTIATQMHSTCYEKAQECTLLGKTYFTAILQKTKLGSYEDGPNKLLQASCTGIWETSMLGPRCPCVCLDGGGPTDRFGRICAEGLEEIIRHSYPSVQYHPLALPRPRGVDLDPQTSDILEATHQVLNATNPQLAENCWLCMTLGTQSPQPSRRMAMSLSMEIAVLASLSGATHRVNRCQLLCREADNRTGIPVGYVHFTNCTSIQESLTRRVIYEILRDYVLHRVMYLCVEQHAYTALPNKWIGLCILASIVPDMSIIPGEEPIPLPSIEYTAGRHKRAVQFIPLLVGLGITGATLAGGTGLGVSVHTYHKLSNQLIEDVQALSGTINDLQDQIDSLAEVVLQNRRGLDLLTAEQGGICLALQEKCCFYANKSGIVRDKIRKLQEDLLARKRALYDNPLWNGLNGFLPYLLPSLGPLFGLILFLTLGPCIRKTLTRIIHDKIQGSKNPRISPAVQATPNRDGYPRSMV</sequence>
<gene>
    <name type="primary">env</name>
</gene>